<evidence type="ECO:0000250" key="1">
    <source>
        <dbReference type="UniProtKB" id="P40223"/>
    </source>
</evidence>
<evidence type="ECO:0000255" key="2"/>
<evidence type="ECO:0000255" key="3">
    <source>
        <dbReference type="PROSITE-ProRule" id="PRU00316"/>
    </source>
</evidence>
<evidence type="ECO:0000269" key="4">
    <source>
    </source>
</evidence>
<evidence type="ECO:0000269" key="5">
    <source>
    </source>
</evidence>
<evidence type="ECO:0000269" key="6">
    <source>
    </source>
</evidence>
<evidence type="ECO:0000269" key="7">
    <source>
    </source>
</evidence>
<evidence type="ECO:0000269" key="8">
    <source>
    </source>
</evidence>
<evidence type="ECO:0000269" key="9">
    <source>
    </source>
</evidence>
<evidence type="ECO:0000269" key="10">
    <source>
    </source>
</evidence>
<evidence type="ECO:0000269" key="11">
    <source ref="4"/>
</evidence>
<evidence type="ECO:0000303" key="12">
    <source>
    </source>
</evidence>
<evidence type="ECO:0000303" key="13">
    <source>
    </source>
</evidence>
<evidence type="ECO:0000305" key="14"/>
<evidence type="ECO:0007829" key="15">
    <source>
        <dbReference type="PDB" id="2D9Q"/>
    </source>
</evidence>
<dbReference type="EMBL" id="X55721">
    <property type="protein sequence ID" value="CAA39253.1"/>
    <property type="molecule type" value="mRNA"/>
</dbReference>
<dbReference type="EMBL" id="X55720">
    <property type="protein sequence ID" value="CAA39252.1"/>
    <property type="molecule type" value="mRNA"/>
</dbReference>
<dbReference type="EMBL" id="M59818">
    <property type="protein sequence ID" value="AAA63176.1"/>
    <property type="molecule type" value="mRNA"/>
</dbReference>
<dbReference type="EMBL" id="M59819">
    <property type="protein sequence ID" value="AAA63177.1"/>
    <property type="molecule type" value="mRNA"/>
</dbReference>
<dbReference type="EMBL" id="M59820">
    <property type="protein sequence ID" value="AAA63178.1"/>
    <property type="molecule type" value="mRNA"/>
</dbReference>
<dbReference type="EMBL" id="S71484">
    <property type="protein sequence ID" value="AAB20660.1"/>
    <property type="molecule type" value="Genomic_DNA"/>
</dbReference>
<dbReference type="EMBL" id="AY148100">
    <property type="protein sequence ID" value="AAN05790.1"/>
    <property type="molecule type" value="Genomic_DNA"/>
</dbReference>
<dbReference type="EMBL" id="BC053585">
    <property type="protein sequence ID" value="AAH53585.1"/>
    <property type="molecule type" value="mRNA"/>
</dbReference>
<dbReference type="CCDS" id="CCDS412.1">
    <molecule id="Q99062-4"/>
</dbReference>
<dbReference type="CCDS" id="CCDS413.1">
    <molecule id="Q99062-1"/>
</dbReference>
<dbReference type="CCDS" id="CCDS414.1">
    <molecule id="Q99062-3"/>
</dbReference>
<dbReference type="PIR" id="B38252">
    <property type="entry name" value="B38252"/>
</dbReference>
<dbReference type="PIR" id="C38252">
    <property type="entry name" value="C38252"/>
</dbReference>
<dbReference type="PIR" id="JH0329">
    <property type="entry name" value="JH0329"/>
</dbReference>
<dbReference type="RefSeq" id="NP_000751.1">
    <molecule id="Q99062-1"/>
    <property type="nucleotide sequence ID" value="NM_000760.4"/>
</dbReference>
<dbReference type="RefSeq" id="NP_724781.1">
    <molecule id="Q99062-3"/>
    <property type="nucleotide sequence ID" value="NM_156039.3"/>
</dbReference>
<dbReference type="RefSeq" id="NP_758519.1">
    <molecule id="Q99062-4"/>
    <property type="nucleotide sequence ID" value="NM_172313.3"/>
</dbReference>
<dbReference type="RefSeq" id="XP_011539050.1">
    <property type="nucleotide sequence ID" value="XM_011540748.2"/>
</dbReference>
<dbReference type="RefSeq" id="XP_016855859.1">
    <property type="nucleotide sequence ID" value="XM_017000370.1"/>
</dbReference>
<dbReference type="RefSeq" id="XP_047302709.1">
    <molecule id="Q99062-3"/>
    <property type="nucleotide sequence ID" value="XM_047446753.1"/>
</dbReference>
<dbReference type="RefSeq" id="XP_054190519.1">
    <molecule id="Q99062-3"/>
    <property type="nucleotide sequence ID" value="XM_054334544.1"/>
</dbReference>
<dbReference type="PDB" id="2D9Q">
    <property type="method" value="X-ray"/>
    <property type="resolution" value="2.80 A"/>
    <property type="chains" value="B=25-332"/>
</dbReference>
<dbReference type="PDBsum" id="2D9Q"/>
<dbReference type="SMR" id="Q99062"/>
<dbReference type="BioGRID" id="107828">
    <property type="interactions" value="20"/>
</dbReference>
<dbReference type="CORUM" id="Q99062"/>
<dbReference type="DIP" id="DIP-5788N"/>
<dbReference type="ELM" id="Q99062"/>
<dbReference type="FunCoup" id="Q99062">
    <property type="interactions" value="724"/>
</dbReference>
<dbReference type="IntAct" id="Q99062">
    <property type="interactions" value="3"/>
</dbReference>
<dbReference type="MINT" id="Q99062"/>
<dbReference type="STRING" id="9606.ENSP00000362195"/>
<dbReference type="BindingDB" id="Q99062"/>
<dbReference type="ChEMBL" id="CHEMBL1996"/>
<dbReference type="DrugBank" id="DB16838">
    <property type="generic name" value="BLZ-945"/>
</dbReference>
<dbReference type="DrugBank" id="DB18704">
    <property type="generic name" value="Efbemalenograstim alfa"/>
</dbReference>
<dbReference type="DrugBank" id="DB15001">
    <property type="generic name" value="Eflapegrastim"/>
</dbReference>
<dbReference type="DrugBank" id="DB05249">
    <property type="generic name" value="FavId"/>
</dbReference>
<dbReference type="DrugBank" id="DB00099">
    <property type="generic name" value="Filgrastim"/>
</dbReference>
<dbReference type="DrugBank" id="DB13144">
    <property type="generic name" value="Lenograstim"/>
</dbReference>
<dbReference type="DrugBank" id="DB13200">
    <property type="generic name" value="Lipegfilgrastim"/>
</dbReference>
<dbReference type="DrugBank" id="DB00019">
    <property type="generic name" value="Pegfilgrastim"/>
</dbReference>
<dbReference type="DrugCentral" id="Q99062"/>
<dbReference type="GuidetoPHARMACOLOGY" id="1719"/>
<dbReference type="GlyCosmos" id="Q99062">
    <property type="glycosylation" value="8 sites, No reported glycans"/>
</dbReference>
<dbReference type="GlyGen" id="Q99062">
    <property type="glycosylation" value="11 sites"/>
</dbReference>
<dbReference type="iPTMnet" id="Q99062"/>
<dbReference type="PhosphoSitePlus" id="Q99062"/>
<dbReference type="BioMuta" id="CSF3R"/>
<dbReference type="DMDM" id="729564"/>
<dbReference type="MassIVE" id="Q99062"/>
<dbReference type="PaxDb" id="9606-ENSP00000362195"/>
<dbReference type="PeptideAtlas" id="Q99062"/>
<dbReference type="ProteomicsDB" id="78226">
    <molecule id="Q99062-1"/>
</dbReference>
<dbReference type="ProteomicsDB" id="78227">
    <molecule id="Q99062-2"/>
</dbReference>
<dbReference type="ProteomicsDB" id="78228">
    <molecule id="Q99062-3"/>
</dbReference>
<dbReference type="ProteomicsDB" id="78229">
    <molecule id="Q99062-4"/>
</dbReference>
<dbReference type="ABCD" id="Q99062">
    <property type="antibodies" value="2 sequenced antibodies"/>
</dbReference>
<dbReference type="Antibodypedia" id="4479">
    <property type="antibodies" value="672 antibodies from 41 providers"/>
</dbReference>
<dbReference type="DNASU" id="1441"/>
<dbReference type="Ensembl" id="ENST00000373103.5">
    <molecule id="Q99062-3"/>
    <property type="protein sequence ID" value="ENSP00000362195.1"/>
    <property type="gene ID" value="ENSG00000119535.20"/>
</dbReference>
<dbReference type="Ensembl" id="ENST00000373104.5">
    <molecule id="Q99062-4"/>
    <property type="protein sequence ID" value="ENSP00000362196.1"/>
    <property type="gene ID" value="ENSG00000119535.20"/>
</dbReference>
<dbReference type="Ensembl" id="ENST00000373106.6">
    <molecule id="Q99062-1"/>
    <property type="protein sequence ID" value="ENSP00000362198.2"/>
    <property type="gene ID" value="ENSG00000119535.20"/>
</dbReference>
<dbReference type="GeneID" id="1441"/>
<dbReference type="KEGG" id="hsa:1441"/>
<dbReference type="MANE-Select" id="ENST00000373106.6">
    <property type="protein sequence ID" value="ENSP00000362198.2"/>
    <property type="RefSeq nucleotide sequence ID" value="NM_000760.4"/>
    <property type="RefSeq protein sequence ID" value="NP_000751.1"/>
</dbReference>
<dbReference type="UCSC" id="uc001cav.3">
    <molecule id="Q99062-1"/>
    <property type="organism name" value="human"/>
</dbReference>
<dbReference type="AGR" id="HGNC:2439"/>
<dbReference type="CTD" id="1441"/>
<dbReference type="DisGeNET" id="1441"/>
<dbReference type="GeneCards" id="CSF3R"/>
<dbReference type="HGNC" id="HGNC:2439">
    <property type="gene designation" value="CSF3R"/>
</dbReference>
<dbReference type="HPA" id="ENSG00000119535">
    <property type="expression patterns" value="Tissue enhanced (bone marrow, lung, lymphoid tissue)"/>
</dbReference>
<dbReference type="MalaCards" id="CSF3R"/>
<dbReference type="MIM" id="138971">
    <property type="type" value="gene"/>
</dbReference>
<dbReference type="MIM" id="162830">
    <property type="type" value="phenotype"/>
</dbReference>
<dbReference type="MIM" id="617014">
    <property type="type" value="phenotype"/>
</dbReference>
<dbReference type="neXtProt" id="NX_Q99062"/>
<dbReference type="OpenTargets" id="ENSG00000119535"/>
<dbReference type="Orphanet" id="98824">
    <property type="disease" value="Atypical chronic myeloid leukemia"/>
</dbReference>
<dbReference type="Orphanet" id="420702">
    <property type="disease" value="Autosomal recessive severe congenital neutropenia due to CSF3R deficiency"/>
</dbReference>
<dbReference type="Orphanet" id="86829">
    <property type="disease" value="Chronic neutrophilic leukemia"/>
</dbReference>
<dbReference type="Orphanet" id="279943">
    <property type="disease" value="Hereditary neutrophilia"/>
</dbReference>
<dbReference type="PharmGKB" id="PA26942"/>
<dbReference type="VEuPathDB" id="HostDB:ENSG00000119535"/>
<dbReference type="eggNOG" id="ENOG502QT3H">
    <property type="taxonomic scope" value="Eukaryota"/>
</dbReference>
<dbReference type="GeneTree" id="ENSGT00940000158915"/>
<dbReference type="HOGENOM" id="CLU_017990_0_0_1"/>
<dbReference type="InParanoid" id="Q99062"/>
<dbReference type="OMA" id="SYCSIPR"/>
<dbReference type="OrthoDB" id="9887129at2759"/>
<dbReference type="PAN-GO" id="Q99062">
    <property type="GO annotations" value="5 GO annotations based on evolutionary models"/>
</dbReference>
<dbReference type="PhylomeDB" id="Q99062"/>
<dbReference type="TreeFam" id="TF338122"/>
<dbReference type="PathwayCommons" id="Q99062"/>
<dbReference type="Reactome" id="R-HSA-449836">
    <property type="pathway name" value="Other interleukin signaling"/>
</dbReference>
<dbReference type="Reactome" id="R-HSA-9616222">
    <property type="pathway name" value="Transcriptional regulation of granulopoiesis"/>
</dbReference>
<dbReference type="Reactome" id="R-HSA-9674555">
    <property type="pathway name" value="Signaling by CSF3 (G-CSF)"/>
</dbReference>
<dbReference type="Reactome" id="R-HSA-9705462">
    <property type="pathway name" value="Inactivation of CSF3 (G-CSF) signaling"/>
</dbReference>
<dbReference type="SignaLink" id="Q99062"/>
<dbReference type="SIGNOR" id="Q99062"/>
<dbReference type="BioGRID-ORCS" id="1441">
    <property type="hits" value="12 hits in 1152 CRISPR screens"/>
</dbReference>
<dbReference type="ChiTaRS" id="CSF3R">
    <property type="organism name" value="human"/>
</dbReference>
<dbReference type="EvolutionaryTrace" id="Q99062"/>
<dbReference type="GeneWiki" id="Granulocyte_colony-stimulating_factor_receptor"/>
<dbReference type="GenomeRNAi" id="1441"/>
<dbReference type="Pharos" id="Q99062">
    <property type="development level" value="Tclin"/>
</dbReference>
<dbReference type="PRO" id="PR:Q99062"/>
<dbReference type="Proteomes" id="UP000005640">
    <property type="component" value="Chromosome 1"/>
</dbReference>
<dbReference type="RNAct" id="Q99062">
    <property type="molecule type" value="protein"/>
</dbReference>
<dbReference type="Bgee" id="ENSG00000119535">
    <property type="expression patterns" value="Expressed in granulocyte and 120 other cell types or tissues"/>
</dbReference>
<dbReference type="ExpressionAtlas" id="Q99062">
    <property type="expression patterns" value="baseline and differential"/>
</dbReference>
<dbReference type="GO" id="GO:0030666">
    <property type="term" value="C:endocytic vesicle membrane"/>
    <property type="evidence" value="ECO:0000304"/>
    <property type="project" value="Reactome"/>
</dbReference>
<dbReference type="GO" id="GO:0009897">
    <property type="term" value="C:external side of plasma membrane"/>
    <property type="evidence" value="ECO:0000318"/>
    <property type="project" value="GO_Central"/>
</dbReference>
<dbReference type="GO" id="GO:0005576">
    <property type="term" value="C:extracellular region"/>
    <property type="evidence" value="ECO:0007669"/>
    <property type="project" value="UniProtKB-SubCell"/>
</dbReference>
<dbReference type="GO" id="GO:0005765">
    <property type="term" value="C:lysosomal membrane"/>
    <property type="evidence" value="ECO:0000304"/>
    <property type="project" value="Reactome"/>
</dbReference>
<dbReference type="GO" id="GO:0005886">
    <property type="term" value="C:plasma membrane"/>
    <property type="evidence" value="ECO:0000304"/>
    <property type="project" value="Reactome"/>
</dbReference>
<dbReference type="GO" id="GO:0043235">
    <property type="term" value="C:receptor complex"/>
    <property type="evidence" value="ECO:0000318"/>
    <property type="project" value="GO_Central"/>
</dbReference>
<dbReference type="GO" id="GO:0019955">
    <property type="term" value="F:cytokine binding"/>
    <property type="evidence" value="ECO:0000318"/>
    <property type="project" value="GO_Central"/>
</dbReference>
<dbReference type="GO" id="GO:0004896">
    <property type="term" value="F:cytokine receptor activity"/>
    <property type="evidence" value="ECO:0000318"/>
    <property type="project" value="GO_Central"/>
</dbReference>
<dbReference type="GO" id="GO:0051916">
    <property type="term" value="F:granulocyte colony-stimulating factor binding"/>
    <property type="evidence" value="ECO:0007669"/>
    <property type="project" value="Ensembl"/>
</dbReference>
<dbReference type="GO" id="GO:0038023">
    <property type="term" value="F:signaling receptor activity"/>
    <property type="evidence" value="ECO:0000304"/>
    <property type="project" value="ProtInc"/>
</dbReference>
<dbReference type="GO" id="GO:0097186">
    <property type="term" value="P:amelogenesis"/>
    <property type="evidence" value="ECO:0007669"/>
    <property type="project" value="Ensembl"/>
</dbReference>
<dbReference type="GO" id="GO:0007155">
    <property type="term" value="P:cell adhesion"/>
    <property type="evidence" value="ECO:0007669"/>
    <property type="project" value="UniProtKB-KW"/>
</dbReference>
<dbReference type="GO" id="GO:0019221">
    <property type="term" value="P:cytokine-mediated signaling pathway"/>
    <property type="evidence" value="ECO:0000318"/>
    <property type="project" value="GO_Central"/>
</dbReference>
<dbReference type="GO" id="GO:0006952">
    <property type="term" value="P:defense response"/>
    <property type="evidence" value="ECO:0000304"/>
    <property type="project" value="ProtInc"/>
</dbReference>
<dbReference type="GO" id="GO:0030593">
    <property type="term" value="P:neutrophil chemotaxis"/>
    <property type="evidence" value="ECO:0007669"/>
    <property type="project" value="Ensembl"/>
</dbReference>
<dbReference type="GO" id="GO:0008284">
    <property type="term" value="P:positive regulation of cell population proliferation"/>
    <property type="evidence" value="ECO:0000318"/>
    <property type="project" value="GO_Central"/>
</dbReference>
<dbReference type="GO" id="GO:0045637">
    <property type="term" value="P:regulation of myeloid cell differentiation"/>
    <property type="evidence" value="ECO:0007669"/>
    <property type="project" value="Ensembl"/>
</dbReference>
<dbReference type="GO" id="GO:0007165">
    <property type="term" value="P:signal transduction"/>
    <property type="evidence" value="ECO:0000303"/>
    <property type="project" value="ProtInc"/>
</dbReference>
<dbReference type="CDD" id="cd00063">
    <property type="entry name" value="FN3"/>
    <property type="match status" value="4"/>
</dbReference>
<dbReference type="FunFam" id="2.60.40.10:FF:000879">
    <property type="entry name" value="Colony stimulating factor 3 receptor"/>
    <property type="match status" value="1"/>
</dbReference>
<dbReference type="FunFam" id="2.60.40.10:FF:001209">
    <property type="entry name" value="Colony stimulating factor 3 receptor"/>
    <property type="match status" value="1"/>
</dbReference>
<dbReference type="FunFam" id="2.60.40.10:FF:001234">
    <property type="entry name" value="Colony stimulating factor 3 receptor"/>
    <property type="match status" value="1"/>
</dbReference>
<dbReference type="FunFam" id="2.60.40.10:FF:000997">
    <property type="entry name" value="Colony stimulating factor 3 receptor (Granulocyte)"/>
    <property type="match status" value="1"/>
</dbReference>
<dbReference type="FunFam" id="2.60.40.10:FF:000465">
    <property type="entry name" value="Granulocyte colony-stimulating factor receptor"/>
    <property type="match status" value="1"/>
</dbReference>
<dbReference type="FunFam" id="2.60.40.10:FF:000839">
    <property type="entry name" value="granulocyte colony-stimulating factor receptor isoform X1"/>
    <property type="match status" value="1"/>
</dbReference>
<dbReference type="Gene3D" id="2.60.40.10">
    <property type="entry name" value="Immunoglobulins"/>
    <property type="match status" value="6"/>
</dbReference>
<dbReference type="InterPro" id="IPR003961">
    <property type="entry name" value="FN3_dom"/>
</dbReference>
<dbReference type="InterPro" id="IPR036116">
    <property type="entry name" value="FN3_sf"/>
</dbReference>
<dbReference type="InterPro" id="IPR003529">
    <property type="entry name" value="Hematopoietin_rcpt_Gp130_CS"/>
</dbReference>
<dbReference type="InterPro" id="IPR036179">
    <property type="entry name" value="Ig-like_dom_sf"/>
</dbReference>
<dbReference type="InterPro" id="IPR013783">
    <property type="entry name" value="Ig-like_fold"/>
</dbReference>
<dbReference type="InterPro" id="IPR010457">
    <property type="entry name" value="IgC2-like_lig-bd"/>
</dbReference>
<dbReference type="InterPro" id="IPR052672">
    <property type="entry name" value="Type1_Cytokine_Rcpt_Type2"/>
</dbReference>
<dbReference type="PANTHER" id="PTHR48423">
    <property type="entry name" value="INTERLEUKIN-27 RECEPTOR SUBUNIT ALPHA"/>
    <property type="match status" value="1"/>
</dbReference>
<dbReference type="PANTHER" id="PTHR48423:SF1">
    <property type="entry name" value="INTERLEUKIN-27 RECEPTOR SUBUNIT ALPHA"/>
    <property type="match status" value="1"/>
</dbReference>
<dbReference type="Pfam" id="PF00041">
    <property type="entry name" value="fn3"/>
    <property type="match status" value="1"/>
</dbReference>
<dbReference type="Pfam" id="PF06328">
    <property type="entry name" value="Lep_receptor_Ig"/>
    <property type="match status" value="1"/>
</dbReference>
<dbReference type="SMART" id="SM00060">
    <property type="entry name" value="FN3"/>
    <property type="match status" value="5"/>
</dbReference>
<dbReference type="SUPFAM" id="SSF49265">
    <property type="entry name" value="Fibronectin type III"/>
    <property type="match status" value="4"/>
</dbReference>
<dbReference type="SUPFAM" id="SSF48726">
    <property type="entry name" value="Immunoglobulin"/>
    <property type="match status" value="1"/>
</dbReference>
<dbReference type="PROSITE" id="PS50853">
    <property type="entry name" value="FN3"/>
    <property type="match status" value="5"/>
</dbReference>
<dbReference type="PROSITE" id="PS01353">
    <property type="entry name" value="HEMATOPO_REC_L_F2"/>
    <property type="match status" value="1"/>
</dbReference>
<gene>
    <name type="primary">CSF3R</name>
    <name type="synonym">GCSFR</name>
</gene>
<reference key="1">
    <citation type="journal article" date="1990" name="J. Exp. Med.">
        <title>Expression cloning of a human granulocyte colony-stimulating factor receptor: a structural mosaic of hematopoietin receptor, immunoglobulin, and fibronectin domains.</title>
        <authorList>
            <person name="Larsen A."/>
            <person name="Davis T."/>
            <person name="Curtis B.M."/>
            <person name="Gimpel S."/>
            <person name="Sims J.E."/>
            <person name="Cosman D."/>
            <person name="Park L."/>
            <person name="Sorensen E."/>
            <person name="March C.J."/>
            <person name="Smith C.A."/>
        </authorList>
    </citation>
    <scope>NUCLEOTIDE SEQUENCE [MRNA] (ISOFORMS 1 AND 4)</scope>
    <source>
        <tissue>Placenta</tissue>
    </source>
</reference>
<reference key="2">
    <citation type="journal article" date="1990" name="Proc. Natl. Acad. Sci. U.S.A.">
        <title>Three different mRNAs encoding human granulocyte colony-stimulating factor receptor.</title>
        <authorList>
            <person name="Fukunaga R."/>
            <person name="Seto Y."/>
            <person name="Mizushima S."/>
            <person name="Nagata S."/>
        </authorList>
    </citation>
    <scope>NUCLEOTIDE SEQUENCE [MRNA] (ISOFORMS 1; 2 AND 3)</scope>
    <source>
        <tissue>Placenta</tissue>
    </source>
</reference>
<reference key="3">
    <citation type="journal article" date="1992" name="J. Immunol.">
        <title>Chromosomal gene organization of the human granulocyte colony-stimulating factor receptor.</title>
        <authorList>
            <person name="Seto Y."/>
            <person name="Fukunaga R."/>
            <person name="Nagata S."/>
        </authorList>
    </citation>
    <scope>NUCLEOTIDE SEQUENCE [GENOMIC DNA]</scope>
</reference>
<reference key="4">
    <citation type="submission" date="2002-09" db="EMBL/GenBank/DDBJ databases">
        <authorList>
            <consortium name="SeattleSNPs variation discovery resource"/>
        </authorList>
    </citation>
    <scope>NUCLEOTIDE SEQUENCE [GENOMIC DNA]</scope>
    <scope>VARIANTS THR-231; ASN-320; ARG-346; LYS-405; GLN-440; HIS-510; HIS-562 AND CYS-583</scope>
</reference>
<reference key="5">
    <citation type="journal article" date="2004" name="Genome Res.">
        <title>The status, quality, and expansion of the NIH full-length cDNA project: the Mammalian Gene Collection (MGC).</title>
        <authorList>
            <consortium name="The MGC Project Team"/>
        </authorList>
    </citation>
    <scope>NUCLEOTIDE SEQUENCE [LARGE SCALE MRNA] (ISOFORM 1)</scope>
    <source>
        <tissue>Blood</tissue>
    </source>
</reference>
<reference key="6">
    <citation type="journal article" date="1995" name="Arch. Biochem. Biophys.">
        <title>Extracellular domain of granulocyte-colony stimulating factor receptor. Interaction with its ligand and identification of a domain in close proximity of ligand-binding region.</title>
        <authorList>
            <person name="Haniu M."/>
            <person name="Horan T."/>
            <person name="Arakawa T."/>
            <person name="Le J."/>
            <person name="Katta V."/>
            <person name="Rohde M.F."/>
        </authorList>
    </citation>
    <scope>PROTEIN SEQUENCE OF 234-269</scope>
</reference>
<reference key="7">
    <citation type="journal article" date="1991" name="EMBO J.">
        <title>Functional domains of the granulocyte colony-stimulating factor receptor.</title>
        <authorList>
            <person name="Fukunaga R."/>
            <person name="Ishizaka-Ikeda E."/>
            <person name="Pan C.-X."/>
            <person name="Seto Y."/>
            <person name="Nagata S."/>
        </authorList>
    </citation>
    <scope>DOMAINS</scope>
</reference>
<reference key="8">
    <citation type="journal article" date="1994" name="Proc. Natl. Acad. Sci. U.S.A.">
        <title>Identification of a nonsense mutation in the granulocyte-colony-stimulating factor receptor in severe congenital neutropenia.</title>
        <authorList>
            <person name="Dong F."/>
            <person name="Hoefsloot L.H."/>
            <person name="Schelen A.M."/>
            <person name="Broeders C.A."/>
            <person name="Meijer Y."/>
            <person name="Veerman A.J."/>
            <person name="Touw I.P."/>
            <person name="Lowenberg B."/>
        </authorList>
    </citation>
    <scope>FUNCTION</scope>
    <scope>POSSIBLE ASSOCIATION WITH SCN</scope>
</reference>
<reference key="9">
    <citation type="journal article" date="2007" name="Front. Biosci.">
        <title>Granulocyte colony-stimulating factor and its receptor in normal myeloid cell development, leukemia and related blood cell disorders.</title>
        <authorList>
            <person name="Touw I.P."/>
            <person name="van de Geijn G.J."/>
        </authorList>
    </citation>
    <scope>REVIEW</scope>
</reference>
<reference key="10">
    <citation type="journal article" date="2009" name="Br. J. Haematol.">
        <title>Clinical implications of ELA2-, HAX1-, and G-CSF-receptor (CSF3R) mutations in severe congenital neutropenia.</title>
        <authorList>
            <person name="Zeidler C."/>
            <person name="Germeshausen M."/>
            <person name="Klein C."/>
            <person name="Welte K."/>
        </authorList>
    </citation>
    <scope>POSSIBLE ASSOCIATION WITH SCN</scope>
</reference>
<reference key="11">
    <citation type="journal article" date="1997" name="Nat. Struct. Biol.">
        <title>Solution structure of an extracellular domain containing the WSxWS motif of the granulocyte colony-stimulating factor receptor and its interaction with ligand.</title>
        <authorList>
            <person name="Yamasaki K."/>
            <person name="Naito S."/>
            <person name="Anaguchi H."/>
            <person name="Ohkubo T."/>
            <person name="Ota Y."/>
        </authorList>
    </citation>
    <scope>STRUCTURE BY NMR OF 227-334</scope>
</reference>
<reference key="12">
    <citation type="journal article" date="1997" name="J. Biol. Chem.">
        <title>Identification of a ligand-binding site on the granulocyte colony-stimulating factor receptor by molecular modeling and mutagenesis.</title>
        <authorList>
            <person name="Layton J.E."/>
            <person name="Iaria J."/>
            <person name="Smith D.K."/>
            <person name="Treutlein H.R."/>
        </authorList>
    </citation>
    <scope>3D-STRUCTURE MODELING OF 125-331</scope>
</reference>
<reference key="13">
    <citation type="journal article" date="2006" name="Proc. Natl. Acad. Sci. U.S.A.">
        <title>Homodimeric cross-over structure of the human granulocyte colony-stimulating factor (GCSF) receptor signaling complex.</title>
        <authorList>
            <person name="Tamada T."/>
            <person name="Honjo E."/>
            <person name="Maeda Y."/>
            <person name="Okamoto T."/>
            <person name="Ishibashi M."/>
            <person name="Tokunaga M."/>
            <person name="Kuroki R."/>
        </authorList>
    </citation>
    <scope>X-RAY CRYSTALLOGRAPHY (2.8 ANGSTROMS) OF 25-333 IN COMPLEX WITH CSF3</scope>
    <scope>GLYCOSYLATION AT ASN-134</scope>
    <scope>DISULFIDE BONDS</scope>
    <scope>SUBUNIT</scope>
</reference>
<reference key="14">
    <citation type="journal article" date="1999" name="J. Exp. Med.">
        <title>Novel point mutation in the extracellular domain of the granulocyte colony-stimulating factor (G-CSF) receptor in a case of severe congenital neutropenia hyporesponsive to G-CSF treatment.</title>
        <authorList>
            <person name="Ward A.C."/>
            <person name="van Aesch Y.M."/>
            <person name="Gits J."/>
            <person name="Schelen A.M."/>
            <person name="de Koning J.P."/>
            <person name="van Leeuwen D."/>
            <person name="Freedman M.H."/>
            <person name="Touw I.P."/>
        </authorList>
    </citation>
    <scope>INVOLVEMENT IN SEVERE CONGENITAL NEUTROPENIA</scope>
    <scope>VARIANT HIS-229</scope>
    <scope>CHARACTERIZATION OF VARIANT HIS-229</scope>
</reference>
<reference key="15">
    <citation type="journal article" date="2009" name="J. Exp. Med.">
        <title>An activating mutation in the CSF3R gene induces a hereditary chronic neutrophilia.</title>
        <authorList>
            <person name="Plo I."/>
            <person name="Zhang Y."/>
            <person name="Le Couedic J.P."/>
            <person name="Nakatake M."/>
            <person name="Boulet J.M."/>
            <person name="Itaya M."/>
            <person name="Smith S.O."/>
            <person name="Debili N."/>
            <person name="Constantinescu S.N."/>
            <person name="Vainchenker W."/>
            <person name="Louache F."/>
            <person name="de Botton S."/>
        </authorList>
    </citation>
    <scope>VARIANT NEUTROPHILIA ASN-640</scope>
</reference>
<reference key="16">
    <citation type="journal article" date="2014" name="Blood">
        <title>Inherited biallelic CSF3R mutations in severe congenital neutropenia.</title>
        <authorList>
            <person name="Triot A."/>
            <person name="Jaervinen P.M."/>
            <person name="Arostegui J.I."/>
            <person name="Murugan D."/>
            <person name="Kohistani N."/>
            <person name="Dapena Diaz J.L."/>
            <person name="Racek T."/>
            <person name="Puchalka J."/>
            <person name="Gertz E.M."/>
            <person name="Schaeffer A.A."/>
            <person name="Kotlarz D."/>
            <person name="Pfeifer D."/>
            <person name="Diaz de Heredia Rubio C."/>
            <person name="Ozdemir M.A."/>
            <person name="Patiroglu T."/>
            <person name="Karakukcu M."/>
            <person name="Sanchez de Toledo Codina J."/>
            <person name="Yaguee J."/>
            <person name="Touw I.P."/>
            <person name="Unal E."/>
            <person name="Klein C."/>
        </authorList>
    </citation>
    <scope>INVOLVEMENT IN SCN7</scope>
    <scope>VARIANT SCN7 CYS-308</scope>
    <scope>CHARACTERIZATION OF VARIANT SCN7 CYS-308</scope>
    <scope>SUBCELLULAR LOCATION</scope>
    <scope>GLYCOSYLATION</scope>
</reference>
<reference key="17">
    <citation type="journal article" date="2015" name="Blood">
        <title>GM-CSF stimulates granulopoiesis in a congenital neutropenia patient with loss-of-function biallelic heterozygous CSF3R mutations.</title>
        <authorList>
            <person name="Klimiankou M."/>
            <person name="Klimenkova O."/>
            <person name="Uenalan M."/>
            <person name="Zeidler A."/>
            <person name="Mellor-Heineke S."/>
            <person name="Kandabarau S."/>
            <person name="Skokowa J."/>
            <person name="Zeidler C."/>
            <person name="Welte K."/>
        </authorList>
    </citation>
    <scope>INVOLVEMENT IN SCN7</scope>
</reference>
<accession>Q99062</accession>
<feature type="signal peptide">
    <location>
        <begin position="1"/>
        <end position="24"/>
    </location>
</feature>
<feature type="chain" id="PRO_0000010874" description="Granulocyte colony-stimulating factor receptor">
    <location>
        <begin position="25"/>
        <end position="836"/>
    </location>
</feature>
<feature type="topological domain" description="Extracellular" evidence="2">
    <location>
        <begin position="25"/>
        <end position="627"/>
    </location>
</feature>
<feature type="transmembrane region" description="Helical" evidence="2">
    <location>
        <begin position="628"/>
        <end position="650"/>
    </location>
</feature>
<feature type="topological domain" description="Cytoplasmic" evidence="2">
    <location>
        <begin position="651"/>
        <end position="836"/>
    </location>
</feature>
<feature type="domain" description="Ig-like C2-type">
    <location>
        <begin position="25"/>
        <end position="117"/>
    </location>
</feature>
<feature type="domain" description="Fibronectin type-III 1" evidence="3">
    <location>
        <begin position="125"/>
        <end position="230"/>
    </location>
</feature>
<feature type="domain" description="Fibronectin type-III 2" evidence="3">
    <location>
        <begin position="233"/>
        <end position="332"/>
    </location>
</feature>
<feature type="domain" description="Fibronectin type-III 3" evidence="3">
    <location>
        <begin position="334"/>
        <end position="430"/>
    </location>
</feature>
<feature type="domain" description="Fibronectin type-III 4" evidence="3">
    <location>
        <begin position="431"/>
        <end position="528"/>
    </location>
</feature>
<feature type="domain" description="Fibronectin type-III 5" evidence="3">
    <location>
        <begin position="530"/>
        <end position="623"/>
    </location>
</feature>
<feature type="short sequence motif" description="WSXWS motif">
    <location>
        <begin position="318"/>
        <end position="322"/>
    </location>
</feature>
<feature type="short sequence motif" description="Box 1 motif">
    <location>
        <begin position="658"/>
        <end position="666"/>
    </location>
</feature>
<feature type="glycosylation site" description="N-linked (GlcNAc...) asparagine" evidence="2">
    <location>
        <position position="51"/>
    </location>
</feature>
<feature type="glycosylation site" description="N-linked (GlcNAc...) asparagine" evidence="2">
    <location>
        <position position="93"/>
    </location>
</feature>
<feature type="glycosylation site" description="N-linked (GlcNAc...) asparagine" evidence="2">
    <location>
        <position position="128"/>
    </location>
</feature>
<feature type="glycosylation site" description="N-linked (GlcNAc...) asparagine" evidence="5">
    <location>
        <position position="134"/>
    </location>
</feature>
<feature type="glycosylation site" description="N-linked (GlcNAc...) asparagine" evidence="2">
    <location>
        <position position="389"/>
    </location>
</feature>
<feature type="glycosylation site" description="N-linked (GlcNAc...) asparagine" evidence="2">
    <location>
        <position position="474"/>
    </location>
</feature>
<feature type="glycosylation site" description="N-linked (GlcNAc...) asparagine" evidence="2">
    <location>
        <position position="579"/>
    </location>
</feature>
<feature type="glycosylation site" description="N-linked (GlcNAc...) asparagine" evidence="2">
    <location>
        <position position="610"/>
    </location>
</feature>
<feature type="disulfide bond" evidence="5">
    <location>
        <begin position="26"/>
        <end position="52"/>
    </location>
</feature>
<feature type="disulfide bond" evidence="5">
    <location>
        <begin position="46"/>
        <end position="101"/>
    </location>
</feature>
<feature type="disulfide bond" evidence="5">
    <location>
        <begin position="131"/>
        <end position="142"/>
    </location>
</feature>
<feature type="disulfide bond" evidence="5">
    <location>
        <begin position="167"/>
        <end position="218"/>
    </location>
</feature>
<feature type="disulfide bond" evidence="5">
    <location>
        <begin position="177"/>
        <end position="186"/>
    </location>
</feature>
<feature type="disulfide bond" evidence="5">
    <location>
        <begin position="248"/>
        <end position="295"/>
    </location>
</feature>
<feature type="disulfide bond" evidence="5">
    <location>
        <begin position="266"/>
        <end position="309"/>
    </location>
</feature>
<feature type="splice variant" id="VSP_001674" description="In isoform 2." evidence="12">
    <original>EGSELHIILGLFGLLLLLTCLCGTAWLCCSPNRKNPLWPSVPDPAHSSLGSWVPTIMEEDAFQLPGLGTPPITKLTVLEEDEKKPVPWESHNSSETCGLPTLVQTYVLQGDPRAVSTQPQSQSGTSDQVLYGQLLGSPTSPGPGHYLRCDSTQPLLAGLTPSPKSYENLWFQASPLGTLVTPAPSQEDDCVFGPLLNFPLLQGIRVHGMEALGSF</original>
    <variation>APTGRIPSGQVSQTQLTAAWAPGCPQSWRRMPSSCPALARHPSPSSQCWRRMKRSRCPGSPITAQRPVASPLWSRPMCSRGTQEQFPPSPNPSLAPAIRSFMGSCWAAPQAQGQGTISAVTPLSPSWRASPPAPSPMRTSGSRPAPWGPW</variation>
    <location>
        <begin position="622"/>
        <end position="836"/>
    </location>
</feature>
<feature type="splice variant" id="VSP_001673" description="In isoform 3." evidence="12">
    <original>E</original>
    <variation>ELPGPRQGQWLGQTSEMSRALTPHPCVQ</variation>
    <location>
        <position position="680"/>
    </location>
</feature>
<feature type="splice variant" id="VSP_001671" description="In isoform 4." evidence="13">
    <original>VLYGQLLGSPTSPGPGHYLRCDSTQPLLAGLTPS</original>
    <variation>AGPPRRSAYFKDQIMLHPAPPNGLLCLFPITSVL</variation>
    <location>
        <begin position="750"/>
        <end position="783"/>
    </location>
</feature>
<feature type="splice variant" id="VSP_001672" description="In isoform 4." evidence="13">
    <location>
        <begin position="784"/>
        <end position="836"/>
    </location>
</feature>
<feature type="sequence variant" id="VAR_062517" description="Found in a patient with apparently autosomal dominant severe congenital neutropenia; likely pathogenic; affects CSF3 mediated proliferation and survival of myeloid cells; abrogates receptor signaling by altering ligand binding; dominant negative effect; dbSNP:rs764202764." evidence="4">
    <original>P</original>
    <variation>H</variation>
    <location>
        <position position="229"/>
    </location>
</feature>
<feature type="sequence variant" id="VAR_014325" description="In dbSNP:rs3917973." evidence="11">
    <original>M</original>
    <variation>T</variation>
    <location>
        <position position="231"/>
    </location>
</feature>
<feature type="sequence variant" id="VAR_077011" description="In SCN7; decreases localization to plasma membrane; decreases receptor signaling; dbSNP:rs606231473." evidence="8">
    <original>R</original>
    <variation>C</variation>
    <location>
        <position position="308"/>
    </location>
</feature>
<feature type="sequence variant" id="VAR_014326" description="In dbSNP:rs3918018." evidence="11">
    <original>D</original>
    <variation>N</variation>
    <location>
        <position position="320"/>
    </location>
</feature>
<feature type="sequence variant" id="VAR_014327" description="In dbSNP:rs3917974." evidence="11">
    <original>Q</original>
    <variation>R</variation>
    <location>
        <position position="346"/>
    </location>
</feature>
<feature type="sequence variant" id="VAR_014328" description="In dbSNP:rs3918019." evidence="11">
    <original>E</original>
    <variation>K</variation>
    <location>
        <position position="405"/>
    </location>
</feature>
<feature type="sequence variant" id="VAR_014329" description="In dbSNP:rs3918020." evidence="11">
    <original>R</original>
    <variation>Q</variation>
    <location>
        <position position="440"/>
    </location>
</feature>
<feature type="sequence variant" id="VAR_014330" description="In dbSNP:rs3917991." evidence="11">
    <original>D</original>
    <variation>H</variation>
    <location>
        <position position="510"/>
    </location>
</feature>
<feature type="sequence variant" id="VAR_014331" description="In dbSNP:rs3917996." evidence="11">
    <original>Y</original>
    <variation>H</variation>
    <location>
        <position position="562"/>
    </location>
</feature>
<feature type="sequence variant" id="VAR_014332" description="In dbSNP:rs3917997." evidence="11">
    <original>R</original>
    <variation>C</variation>
    <location>
        <position position="583"/>
    </location>
</feature>
<feature type="sequence variant" id="VAR_063065" description="In neutrophilia; dbSNP:rs121918426." evidence="7">
    <original>T</original>
    <variation>N</variation>
    <location>
        <position position="640"/>
    </location>
</feature>
<feature type="strand" evidence="15">
    <location>
        <begin position="29"/>
        <end position="32"/>
    </location>
</feature>
<feature type="strand" evidence="15">
    <location>
        <begin position="34"/>
        <end position="36"/>
    </location>
</feature>
<feature type="strand" evidence="15">
    <location>
        <begin position="42"/>
        <end position="46"/>
    </location>
</feature>
<feature type="strand" evidence="15">
    <location>
        <begin position="62"/>
        <end position="67"/>
    </location>
</feature>
<feature type="strand" evidence="15">
    <location>
        <begin position="79"/>
        <end position="81"/>
    </location>
</feature>
<feature type="strand" evidence="15">
    <location>
        <begin position="85"/>
        <end position="90"/>
    </location>
</feature>
<feature type="strand" evidence="15">
    <location>
        <begin position="94"/>
        <end position="119"/>
    </location>
</feature>
<feature type="strand" evidence="15">
    <location>
        <begin position="127"/>
        <end position="134"/>
    </location>
</feature>
<feature type="turn" evidence="15">
    <location>
        <begin position="135"/>
        <end position="138"/>
    </location>
</feature>
<feature type="strand" evidence="15">
    <location>
        <begin position="139"/>
        <end position="145"/>
    </location>
</feature>
<feature type="strand" evidence="15">
    <location>
        <begin position="155"/>
        <end position="162"/>
    </location>
</feature>
<feature type="strand" evidence="15">
    <location>
        <begin position="174"/>
        <end position="177"/>
    </location>
</feature>
<feature type="strand" evidence="15">
    <location>
        <begin position="184"/>
        <end position="189"/>
    </location>
</feature>
<feature type="helix" evidence="15">
    <location>
        <begin position="190"/>
        <end position="192"/>
    </location>
</feature>
<feature type="strand" evidence="15">
    <location>
        <begin position="195"/>
        <end position="197"/>
    </location>
</feature>
<feature type="strand" evidence="15">
    <location>
        <begin position="199"/>
        <end position="207"/>
    </location>
</feature>
<feature type="strand" evidence="15">
    <location>
        <begin position="210"/>
        <end position="213"/>
    </location>
</feature>
<feature type="strand" evidence="15">
    <location>
        <begin position="217"/>
        <end position="219"/>
    </location>
</feature>
<feature type="helix" evidence="15">
    <location>
        <begin position="221"/>
        <end position="224"/>
    </location>
</feature>
<feature type="strand" evidence="15">
    <location>
        <begin position="231"/>
        <end position="234"/>
    </location>
</feature>
<feature type="strand" evidence="15">
    <location>
        <begin position="249"/>
        <end position="254"/>
    </location>
</feature>
<feature type="helix" evidence="15">
    <location>
        <begin position="257"/>
        <end position="259"/>
    </location>
</feature>
<feature type="strand" evidence="15">
    <location>
        <begin position="264"/>
        <end position="275"/>
    </location>
</feature>
<feature type="strand" evidence="15">
    <location>
        <begin position="280"/>
        <end position="285"/>
    </location>
</feature>
<feature type="strand" evidence="15">
    <location>
        <begin position="289"/>
        <end position="294"/>
    </location>
</feature>
<feature type="strand" evidence="15">
    <location>
        <begin position="303"/>
        <end position="311"/>
    </location>
</feature>
<feature type="strand" evidence="15">
    <location>
        <begin position="325"/>
        <end position="327"/>
    </location>
</feature>
<organism>
    <name type="scientific">Homo sapiens</name>
    <name type="common">Human</name>
    <dbReference type="NCBI Taxonomy" id="9606"/>
    <lineage>
        <taxon>Eukaryota</taxon>
        <taxon>Metazoa</taxon>
        <taxon>Chordata</taxon>
        <taxon>Craniata</taxon>
        <taxon>Vertebrata</taxon>
        <taxon>Euteleostomi</taxon>
        <taxon>Mammalia</taxon>
        <taxon>Eutheria</taxon>
        <taxon>Euarchontoglires</taxon>
        <taxon>Primates</taxon>
        <taxon>Haplorrhini</taxon>
        <taxon>Catarrhini</taxon>
        <taxon>Hominidae</taxon>
        <taxon>Homo</taxon>
    </lineage>
</organism>
<protein>
    <recommendedName>
        <fullName>Granulocyte colony-stimulating factor receptor</fullName>
        <shortName>G-CSF receptor</shortName>
        <shortName>G-CSF-R</shortName>
    </recommendedName>
    <cdAntigenName>CD114</cdAntigenName>
</protein>
<proteinExistence type="evidence at protein level"/>
<sequence>MARLGNCSLTWAALIILLLPGSLEECGHISVSAPIVHLGDPITASCIIKQNCSHLDPEPQILWRLGAELQPGGRQQRLSDGTQESIITLPHLNHTQAFLSCCLNWGNSLQILDQVELRAGYPPAIPHNLSCLMNLTTSSLICQWEPGPETHLPTSFTLKSFKSRGNCQTQGDSILDCVPKDGQSHCCIPRKHLLLYQNMGIWVQAENALGTSMSPQLCLDPMDVVKLEPPMLRTMDPSPEAAPPQAGCLQLCWEPWQPGLHINQKCELRHKPQRGEASWALVGPLPLEALQYELCGLLPATAYTLQIRCIRWPLPGHWSDWSPSLELRTTERAPTVRLDTWWRQRQLDPRTVQLFWKPVPLEEDSGRIQGYVVSWRPSGQAGAILPLCNTTELSCTFHLPSEAQEVALVAYNSAGTSRPTPVVFSESRGPALTRLHAMARDPHSLWVGWEPPNPWPQGYVIEWGLGPPSASNSNKTWRMEQNGRATGFLLKENIRPFQLYEIIVTPLYQDTMGPSQHVYAYSQEMAPSHAPELHLKHIGKTWAQLEWVPEPPELGKSPLTHYTIFWTNAQNQSFSAILNASSRGFVLHGLEPASLYHIHLMAASQAGATNSTVLTLMTLTPEGSELHIILGLFGLLLLLTCLCGTAWLCCSPNRKNPLWPSVPDPAHSSLGSWVPTIMEEDAFQLPGLGTPPITKLTVLEEDEKKPVPWESHNSSETCGLPTLVQTYVLQGDPRAVSTQPQSQSGTSDQVLYGQLLGSPTSPGPGHYLRCDSTQPLLAGLTPSPKSYENLWFQASPLGTLVTPAPSQEDDCVFGPLLNFPLLQGIRVHGMEALGSF</sequence>
<keyword id="KW-0002">3D-structure</keyword>
<keyword id="KW-0025">Alternative splicing</keyword>
<keyword id="KW-0130">Cell adhesion</keyword>
<keyword id="KW-1003">Cell membrane</keyword>
<keyword id="KW-0903">Direct protein sequencing</keyword>
<keyword id="KW-0225">Disease variant</keyword>
<keyword id="KW-1015">Disulfide bond</keyword>
<keyword id="KW-0325">Glycoprotein</keyword>
<keyword id="KW-0393">Immunoglobulin domain</keyword>
<keyword id="KW-0472">Membrane</keyword>
<keyword id="KW-1267">Proteomics identification</keyword>
<keyword id="KW-0675">Receptor</keyword>
<keyword id="KW-1185">Reference proteome</keyword>
<keyword id="KW-0677">Repeat</keyword>
<keyword id="KW-0964">Secreted</keyword>
<keyword id="KW-0732">Signal</keyword>
<keyword id="KW-0812">Transmembrane</keyword>
<keyword id="KW-1133">Transmembrane helix</keyword>
<comment type="function">
    <text evidence="10">Receptor for granulocyte colony-stimulating factor (CSF3), essential for granulocytic maturation. Plays a crucial role in the proliferation, differentiation and survival of cells along the neutrophilic lineage. In addition it may function in some adhesion or recognition events at the cell surface.</text>
</comment>
<comment type="subunit">
    <text evidence="1 5">Homodimer. The dimeric receptor binds two CSF3 molecules. Interacts with CEACAM1; down-regulates the CSF3R-STAT3 pathway through recruitment of PTPN6 that dephosphorylates CSF3R (By similarity).</text>
</comment>
<comment type="interaction">
    <interactant intactId="EBI-7331284">
        <id>Q99062</id>
    </interactant>
    <interactant intactId="EBI-518675">
        <id>P40763</id>
        <label>STAT3</label>
    </interactant>
    <organismsDiffer>false</organismsDiffer>
    <experiments>4</experiments>
</comment>
<comment type="interaction">
    <interactant intactId="EBI-7331284">
        <id>Q99062</id>
    </interactant>
    <interactant intactId="EBI-3390054">
        <id>P0CG48</id>
        <label>UBC</label>
    </interactant>
    <organismsDiffer>false</organismsDiffer>
    <experiments>2</experiments>
</comment>
<comment type="subcellular location">
    <molecule>Isoform 2</molecule>
    <subcellularLocation>
        <location evidence="14">Secreted</location>
    </subcellularLocation>
</comment>
<comment type="subcellular location">
    <subcellularLocation>
        <location evidence="8">Cell membrane</location>
        <topology evidence="2">Single-pass type I membrane protein</topology>
    </subcellularLocation>
</comment>
<comment type="alternative products">
    <event type="alternative splicing"/>
    <isoform>
        <id>Q99062-1</id>
        <name>1</name>
        <name>GCSFR-1</name>
        <sequence type="displayed"/>
    </isoform>
    <isoform>
        <id>Q99062-2</id>
        <name>2</name>
        <name>GCSFR-2</name>
        <sequence type="described" ref="VSP_001674"/>
    </isoform>
    <isoform>
        <id>Q99062-3</id>
        <name>3</name>
        <name>GCSFR-3</name>
        <sequence type="described" ref="VSP_001673"/>
    </isoform>
    <isoform>
        <id>Q99062-4</id>
        <name>4</name>
        <name>GCSFR-4</name>
        <name>D7</name>
        <sequence type="described" ref="VSP_001671 VSP_001672"/>
    </isoform>
    <text>Additional isoforms seem to exist. Experimental confirmation may be lacking for some isoforms.</text>
</comment>
<comment type="tissue specificity">
    <text>One or several isoforms have been found in myelogenous leukemia cell line KG-1, leukemia U-937 cell line, in bone marrow cells, placenta, and peripheral blood granulocytes. Isoform GCSFR-2 is found only in leukemia U-937 cells. Isoform GCSFR-3 is highly expressed in placenta.</text>
</comment>
<comment type="domain">
    <text evidence="6">The WSXWS motif appears to be necessary for proper protein folding and thereby efficient intracellular transport and cell-surface receptor binding.</text>
</comment>
<comment type="domain">
    <text evidence="6">The box 1 motif is required for JAK interaction and/or activation.</text>
</comment>
<comment type="PTM">
    <text evidence="8">N-glycosylated.</text>
</comment>
<comment type="disease" evidence="7">
    <disease id="DI-02545">
        <name>Hereditary neutrophilia</name>
        <acronym>NEUTROPHILIA</acronym>
        <description>A form of lifelong, persistent neutrophilia, a condition characterized by an increase in the number of neutrophils in the blood.</description>
        <dbReference type="MIM" id="162830"/>
    </disease>
    <text>The disease is caused by variants affecting the gene represented in this entry.</text>
</comment>
<comment type="disease" evidence="8 9">
    <disease id="DI-04754">
        <name>Neutropenia, severe congenital 7, autosomal recessive</name>
        <acronym>SCN7</acronym>
        <description>A form of severe congenital neutropenia, a disorder of hematopoiesis characterized by maturation arrest of granulopoiesis at the level of promyelocytes with peripheral blood absolute neutrophil counts below 0.5 x 10(9)/l and early onset of severe bacterial infections.</description>
        <dbReference type="MIM" id="617014"/>
    </disease>
    <text>The disease is caused by variants affecting the gene represented in this entry.</text>
</comment>
<comment type="miscellaneous">
    <text>Mutations in CSF3R acquired in multipotent hematopoietic progenitor cells and resulting in truncated hyper-responsive forms of the receptor, have been identified in most cases of severe congenital neutropenia (SCN). Patients carrying these mutations are at risk for developing myelodysplastic syndromes and/or acute myeloid leukemia. Constitutive mutations leading to hyporesponsive forms of the receptor are responsible for the refractoriness to CSF3 treatment observed in some SCN patients.</text>
</comment>
<comment type="similarity">
    <text evidence="14">Belongs to the type I cytokine receptor family. Type 2 subfamily.</text>
</comment>
<name>CSF3R_HUMAN</name>